<comment type="function">
    <text evidence="1">Pore-forming subunit of a potassium efflux system that confers protection against electrophiles. Catalyzes K(+)/H(+) antiport.</text>
</comment>
<comment type="subunit">
    <text evidence="1">Interacts with the regulatory subunit KefG.</text>
</comment>
<comment type="subcellular location">
    <subcellularLocation>
        <location evidence="1">Cell inner membrane</location>
        <topology evidence="1">Multi-pass membrane protein</topology>
    </subcellularLocation>
</comment>
<comment type="similarity">
    <text evidence="1">Belongs to the monovalent cation:proton antiporter 2 (CPA2) transporter (TC 2.A.37) family. KefB subfamily.</text>
</comment>
<proteinExistence type="inferred from homology"/>
<dbReference type="EMBL" id="CU928160">
    <property type="protein sequence ID" value="CAR00289.1"/>
    <property type="molecule type" value="Genomic_DNA"/>
</dbReference>
<dbReference type="RefSeq" id="WP_000399129.1">
    <property type="nucleotide sequence ID" value="NC_011741.1"/>
</dbReference>
<dbReference type="SMR" id="B7M1Q2"/>
<dbReference type="KEGG" id="ecr:ECIAI1_3487"/>
<dbReference type="HOGENOM" id="CLU_005126_9_3_6"/>
<dbReference type="GO" id="GO:0005886">
    <property type="term" value="C:plasma membrane"/>
    <property type="evidence" value="ECO:0007669"/>
    <property type="project" value="UniProtKB-SubCell"/>
</dbReference>
<dbReference type="GO" id="GO:0015503">
    <property type="term" value="F:glutathione-regulated potassium exporter activity"/>
    <property type="evidence" value="ECO:0007669"/>
    <property type="project" value="UniProtKB-UniRule"/>
</dbReference>
<dbReference type="GO" id="GO:1902600">
    <property type="term" value="P:proton transmembrane transport"/>
    <property type="evidence" value="ECO:0007669"/>
    <property type="project" value="InterPro"/>
</dbReference>
<dbReference type="FunFam" id="1.20.1530.20:FF:000001">
    <property type="entry name" value="Glutathione-regulated potassium-efflux system protein KefB"/>
    <property type="match status" value="1"/>
</dbReference>
<dbReference type="FunFam" id="3.40.50.720:FF:000036">
    <property type="entry name" value="Glutathione-regulated potassium-efflux system protein KefB"/>
    <property type="match status" value="1"/>
</dbReference>
<dbReference type="Gene3D" id="1.20.1530.20">
    <property type="match status" value="1"/>
</dbReference>
<dbReference type="Gene3D" id="3.40.50.720">
    <property type="entry name" value="NAD(P)-binding Rossmann-like Domain"/>
    <property type="match status" value="1"/>
</dbReference>
<dbReference type="HAMAP" id="MF_01412">
    <property type="entry name" value="K_H_efflux_KefB"/>
    <property type="match status" value="1"/>
</dbReference>
<dbReference type="InterPro" id="IPR006153">
    <property type="entry name" value="Cation/H_exchanger_TM"/>
</dbReference>
<dbReference type="InterPro" id="IPR004771">
    <property type="entry name" value="K/H_exchanger"/>
</dbReference>
<dbReference type="InterPro" id="IPR020884">
    <property type="entry name" value="K_H_efflux_KefB"/>
</dbReference>
<dbReference type="InterPro" id="IPR038770">
    <property type="entry name" value="Na+/solute_symporter_sf"/>
</dbReference>
<dbReference type="InterPro" id="IPR036291">
    <property type="entry name" value="NAD(P)-bd_dom_sf"/>
</dbReference>
<dbReference type="InterPro" id="IPR003148">
    <property type="entry name" value="RCK_N"/>
</dbReference>
<dbReference type="NCBIfam" id="TIGR00932">
    <property type="entry name" value="2a37"/>
    <property type="match status" value="1"/>
</dbReference>
<dbReference type="NCBIfam" id="NF002973">
    <property type="entry name" value="PRK03659.1"/>
    <property type="match status" value="1"/>
</dbReference>
<dbReference type="PANTHER" id="PTHR46157">
    <property type="entry name" value="K(+) EFFLUX ANTIPORTER 3, CHLOROPLASTIC"/>
    <property type="match status" value="1"/>
</dbReference>
<dbReference type="PANTHER" id="PTHR46157:SF4">
    <property type="entry name" value="K(+) EFFLUX ANTIPORTER 3, CHLOROPLASTIC"/>
    <property type="match status" value="1"/>
</dbReference>
<dbReference type="Pfam" id="PF00999">
    <property type="entry name" value="Na_H_Exchanger"/>
    <property type="match status" value="1"/>
</dbReference>
<dbReference type="Pfam" id="PF02254">
    <property type="entry name" value="TrkA_N"/>
    <property type="match status" value="1"/>
</dbReference>
<dbReference type="SUPFAM" id="SSF51735">
    <property type="entry name" value="NAD(P)-binding Rossmann-fold domains"/>
    <property type="match status" value="1"/>
</dbReference>
<dbReference type="PROSITE" id="PS51201">
    <property type="entry name" value="RCK_N"/>
    <property type="match status" value="1"/>
</dbReference>
<keyword id="KW-0050">Antiport</keyword>
<keyword id="KW-0997">Cell inner membrane</keyword>
<keyword id="KW-1003">Cell membrane</keyword>
<keyword id="KW-0406">Ion transport</keyword>
<keyword id="KW-0472">Membrane</keyword>
<keyword id="KW-0630">Potassium</keyword>
<keyword id="KW-0633">Potassium transport</keyword>
<keyword id="KW-0812">Transmembrane</keyword>
<keyword id="KW-1133">Transmembrane helix</keyword>
<keyword id="KW-0813">Transport</keyword>
<gene>
    <name evidence="1" type="primary">kefB</name>
    <name type="ordered locus">ECIAI1_3487</name>
</gene>
<organism>
    <name type="scientific">Escherichia coli O8 (strain IAI1)</name>
    <dbReference type="NCBI Taxonomy" id="585034"/>
    <lineage>
        <taxon>Bacteria</taxon>
        <taxon>Pseudomonadati</taxon>
        <taxon>Pseudomonadota</taxon>
        <taxon>Gammaproteobacteria</taxon>
        <taxon>Enterobacterales</taxon>
        <taxon>Enterobacteriaceae</taxon>
        <taxon>Escherichia</taxon>
    </lineage>
</organism>
<evidence type="ECO:0000255" key="1">
    <source>
        <dbReference type="HAMAP-Rule" id="MF_01412"/>
    </source>
</evidence>
<evidence type="ECO:0000255" key="2">
    <source>
        <dbReference type="PROSITE-ProRule" id="PRU00543"/>
    </source>
</evidence>
<name>KEFB_ECO8A</name>
<protein>
    <recommendedName>
        <fullName evidence="1">Glutathione-regulated potassium-efflux system protein KefB</fullName>
    </recommendedName>
    <alternativeName>
        <fullName evidence="1">K(+)/H(+) antiporter</fullName>
    </alternativeName>
</protein>
<accession>B7M1Q2</accession>
<sequence length="601" mass="66395">MEGSDFLLAGVLFLFAAVAAVPLASRLGIGAVLGYLLAGIAIGPWGLGFISDVDEILHFSELGVVFLMFIIGLELNPSKLWQLRRSIFGVGAAQVLLSAALLAGLLMLTDFAWQAAVVGGIGLAMSSTAMALQLMREKGMNRSESGQLGFSVLLFQDLAVIPALALVPLLAGSADEHFDWMKIGMKVLAFVGMLIGGRYLLRPVFRFIAASGVREVFTAATLLLVLGSALFMDALGLSMALGTFIAGVLLAESEYRHELETAIDPFKGLLLGLFFISVGMSLNLGVLYTHLLWVVISVVVLVAVKILVLYLLARLYGVRSSERMQFAGVLSQGGEFAFVLFSTASSQRLFQGDQMALLLVTVTLSMMTTPLLMKLVDKWLSRQFNGPEEEDEKPWVNDDKPQVIVVGFGRFGQVIGRLLMANKMRITVLERDISAVNLMRKYGYKVYYGDATQVDLLRSAGAEAAVSIVITCNEPEDTMKLVEICQQHFPHLHILARARGRVEAHELLQAGVTQFSRETFSSALELGRKTLVTLGMHPHQAQRAQLHFRRLDMRMLRELIPMHADTVQISRAREARRELEEIFQREMQQERRQLDGWDEFE</sequence>
<reference key="1">
    <citation type="journal article" date="2009" name="PLoS Genet.">
        <title>Organised genome dynamics in the Escherichia coli species results in highly diverse adaptive paths.</title>
        <authorList>
            <person name="Touchon M."/>
            <person name="Hoede C."/>
            <person name="Tenaillon O."/>
            <person name="Barbe V."/>
            <person name="Baeriswyl S."/>
            <person name="Bidet P."/>
            <person name="Bingen E."/>
            <person name="Bonacorsi S."/>
            <person name="Bouchier C."/>
            <person name="Bouvet O."/>
            <person name="Calteau A."/>
            <person name="Chiapello H."/>
            <person name="Clermont O."/>
            <person name="Cruveiller S."/>
            <person name="Danchin A."/>
            <person name="Diard M."/>
            <person name="Dossat C."/>
            <person name="Karoui M.E."/>
            <person name="Frapy E."/>
            <person name="Garry L."/>
            <person name="Ghigo J.M."/>
            <person name="Gilles A.M."/>
            <person name="Johnson J."/>
            <person name="Le Bouguenec C."/>
            <person name="Lescat M."/>
            <person name="Mangenot S."/>
            <person name="Martinez-Jehanne V."/>
            <person name="Matic I."/>
            <person name="Nassif X."/>
            <person name="Oztas S."/>
            <person name="Petit M.A."/>
            <person name="Pichon C."/>
            <person name="Rouy Z."/>
            <person name="Ruf C.S."/>
            <person name="Schneider D."/>
            <person name="Tourret J."/>
            <person name="Vacherie B."/>
            <person name="Vallenet D."/>
            <person name="Medigue C."/>
            <person name="Rocha E.P.C."/>
            <person name="Denamur E."/>
        </authorList>
    </citation>
    <scope>NUCLEOTIDE SEQUENCE [LARGE SCALE GENOMIC DNA]</scope>
    <source>
        <strain>IAI1</strain>
    </source>
</reference>
<feature type="chain" id="PRO_1000145517" description="Glutathione-regulated potassium-efflux system protein KefB">
    <location>
        <begin position="1"/>
        <end position="601"/>
    </location>
</feature>
<feature type="transmembrane region" description="Helical" evidence="1">
    <location>
        <begin position="4"/>
        <end position="24"/>
    </location>
</feature>
<feature type="transmembrane region" description="Helical" evidence="1">
    <location>
        <begin position="29"/>
        <end position="49"/>
    </location>
</feature>
<feature type="transmembrane region" description="Helical" evidence="1">
    <location>
        <begin position="55"/>
        <end position="75"/>
    </location>
</feature>
<feature type="transmembrane region" description="Helical" evidence="1">
    <location>
        <begin position="87"/>
        <end position="107"/>
    </location>
</feature>
<feature type="transmembrane region" description="Helical" evidence="1">
    <location>
        <begin position="115"/>
        <end position="135"/>
    </location>
</feature>
<feature type="transmembrane region" description="Helical" evidence="1">
    <location>
        <begin position="152"/>
        <end position="172"/>
    </location>
</feature>
<feature type="transmembrane region" description="Helical" evidence="1">
    <location>
        <begin position="177"/>
        <end position="197"/>
    </location>
</feature>
<feature type="transmembrane region" description="Helical" evidence="1">
    <location>
        <begin position="207"/>
        <end position="227"/>
    </location>
</feature>
<feature type="transmembrane region" description="Helical" evidence="1">
    <location>
        <begin position="230"/>
        <end position="250"/>
    </location>
</feature>
<feature type="transmembrane region" description="Helical" evidence="1">
    <location>
        <begin position="268"/>
        <end position="288"/>
    </location>
</feature>
<feature type="transmembrane region" description="Helical" evidence="1">
    <location>
        <begin position="291"/>
        <end position="311"/>
    </location>
</feature>
<feature type="transmembrane region" description="Helical" evidence="1">
    <location>
        <begin position="324"/>
        <end position="344"/>
    </location>
</feature>
<feature type="transmembrane region" description="Helical" evidence="1">
    <location>
        <begin position="356"/>
        <end position="376"/>
    </location>
</feature>
<feature type="domain" description="RCK N-terminal" evidence="2">
    <location>
        <begin position="400"/>
        <end position="519"/>
    </location>
</feature>